<sequence length="265" mass="28251">MSKITALFKELKASGKKGLIPFITAGDPDPKLTVELMHALVRGGSSVIELGVPFSDPMADGPVIQRSSERALTQGVTLHSCLDMVKEFRKKDATTPVVLMGYANPVEQMGAERFATEAKAAGVDGVLIVDYPPEECVDFAARMRVAGIDPIFLLAPTSSHERIKEAAKIASGYIYYVSMRGVTGASHLNTQDVASIIPKIREETDIPIAVGFGINDAASAKAVSVSADAVVIGSRIIRLLEDAPPGQAVQSLETFIREIRDALDS</sequence>
<accession>A4SWX7</accession>
<protein>
    <recommendedName>
        <fullName evidence="1">Tryptophan synthase alpha chain</fullName>
        <ecNumber evidence="1">4.2.1.20</ecNumber>
    </recommendedName>
</protein>
<organism>
    <name type="scientific">Polynucleobacter asymbioticus (strain DSM 18221 / CIP 109841 / QLW-P1DMWA-1)</name>
    <name type="common">Polynucleobacter necessarius subsp. asymbioticus</name>
    <dbReference type="NCBI Taxonomy" id="312153"/>
    <lineage>
        <taxon>Bacteria</taxon>
        <taxon>Pseudomonadati</taxon>
        <taxon>Pseudomonadota</taxon>
        <taxon>Betaproteobacteria</taxon>
        <taxon>Burkholderiales</taxon>
        <taxon>Burkholderiaceae</taxon>
        <taxon>Polynucleobacter</taxon>
    </lineage>
</organism>
<comment type="function">
    <text evidence="1">The alpha subunit is responsible for the aldol cleavage of indoleglycerol phosphate to indole and glyceraldehyde 3-phosphate.</text>
</comment>
<comment type="catalytic activity">
    <reaction evidence="1">
        <text>(1S,2R)-1-C-(indol-3-yl)glycerol 3-phosphate + L-serine = D-glyceraldehyde 3-phosphate + L-tryptophan + H2O</text>
        <dbReference type="Rhea" id="RHEA:10532"/>
        <dbReference type="ChEBI" id="CHEBI:15377"/>
        <dbReference type="ChEBI" id="CHEBI:33384"/>
        <dbReference type="ChEBI" id="CHEBI:57912"/>
        <dbReference type="ChEBI" id="CHEBI:58866"/>
        <dbReference type="ChEBI" id="CHEBI:59776"/>
        <dbReference type="EC" id="4.2.1.20"/>
    </reaction>
</comment>
<comment type="pathway">
    <text evidence="1">Amino-acid biosynthesis; L-tryptophan biosynthesis; L-tryptophan from chorismate: step 5/5.</text>
</comment>
<comment type="subunit">
    <text evidence="1">Tetramer of two alpha and two beta chains.</text>
</comment>
<comment type="similarity">
    <text evidence="1">Belongs to the TrpA family.</text>
</comment>
<feature type="chain" id="PRO_1000076361" description="Tryptophan synthase alpha chain">
    <location>
        <begin position="1"/>
        <end position="265"/>
    </location>
</feature>
<feature type="active site" description="Proton acceptor" evidence="1">
    <location>
        <position position="49"/>
    </location>
</feature>
<feature type="active site" description="Proton acceptor" evidence="1">
    <location>
        <position position="60"/>
    </location>
</feature>
<name>TRPA_POLAQ</name>
<reference key="1">
    <citation type="journal article" date="2012" name="Stand. Genomic Sci.">
        <title>Complete genome sequence of Polynucleobacter necessarius subsp. asymbioticus type strain (QLW-P1DMWA-1(T)).</title>
        <authorList>
            <person name="Meincke L."/>
            <person name="Copeland A."/>
            <person name="Lapidus A."/>
            <person name="Lucas S."/>
            <person name="Berry K.W."/>
            <person name="Del Rio T.G."/>
            <person name="Hammon N."/>
            <person name="Dalin E."/>
            <person name="Tice H."/>
            <person name="Pitluck S."/>
            <person name="Richardson P."/>
            <person name="Bruce D."/>
            <person name="Goodwin L."/>
            <person name="Han C."/>
            <person name="Tapia R."/>
            <person name="Detter J.C."/>
            <person name="Schmutz J."/>
            <person name="Brettin T."/>
            <person name="Larimer F."/>
            <person name="Land M."/>
            <person name="Hauser L."/>
            <person name="Kyrpides N.C."/>
            <person name="Ivanova N."/>
            <person name="Goker M."/>
            <person name="Woyke T."/>
            <person name="Wu Q.L."/>
            <person name="Pockl M."/>
            <person name="Hahn M.W."/>
            <person name="Klenk H.P."/>
        </authorList>
    </citation>
    <scope>NUCLEOTIDE SEQUENCE [LARGE SCALE GENOMIC DNA]</scope>
    <source>
        <strain>DSM 18221 / CIP 109841 / QLW-P1DMWA-1</strain>
    </source>
</reference>
<keyword id="KW-0028">Amino-acid biosynthesis</keyword>
<keyword id="KW-0057">Aromatic amino acid biosynthesis</keyword>
<keyword id="KW-0456">Lyase</keyword>
<keyword id="KW-1185">Reference proteome</keyword>
<keyword id="KW-0822">Tryptophan biosynthesis</keyword>
<dbReference type="EC" id="4.2.1.20" evidence="1"/>
<dbReference type="EMBL" id="CP000655">
    <property type="protein sequence ID" value="ABP33991.1"/>
    <property type="molecule type" value="Genomic_DNA"/>
</dbReference>
<dbReference type="RefSeq" id="WP_011902616.1">
    <property type="nucleotide sequence ID" value="NC_009379.1"/>
</dbReference>
<dbReference type="SMR" id="A4SWX7"/>
<dbReference type="GeneID" id="31481134"/>
<dbReference type="KEGG" id="pnu:Pnuc_0773"/>
<dbReference type="eggNOG" id="COG0159">
    <property type="taxonomic scope" value="Bacteria"/>
</dbReference>
<dbReference type="HOGENOM" id="CLU_016734_0_4_4"/>
<dbReference type="UniPathway" id="UPA00035">
    <property type="reaction ID" value="UER00044"/>
</dbReference>
<dbReference type="Proteomes" id="UP000000231">
    <property type="component" value="Chromosome"/>
</dbReference>
<dbReference type="GO" id="GO:0005829">
    <property type="term" value="C:cytosol"/>
    <property type="evidence" value="ECO:0007669"/>
    <property type="project" value="TreeGrafter"/>
</dbReference>
<dbReference type="GO" id="GO:0004834">
    <property type="term" value="F:tryptophan synthase activity"/>
    <property type="evidence" value="ECO:0007669"/>
    <property type="project" value="UniProtKB-UniRule"/>
</dbReference>
<dbReference type="CDD" id="cd04724">
    <property type="entry name" value="Tryptophan_synthase_alpha"/>
    <property type="match status" value="1"/>
</dbReference>
<dbReference type="FunFam" id="3.20.20.70:FF:000037">
    <property type="entry name" value="Tryptophan synthase alpha chain"/>
    <property type="match status" value="1"/>
</dbReference>
<dbReference type="Gene3D" id="3.20.20.70">
    <property type="entry name" value="Aldolase class I"/>
    <property type="match status" value="1"/>
</dbReference>
<dbReference type="HAMAP" id="MF_00131">
    <property type="entry name" value="Trp_synth_alpha"/>
    <property type="match status" value="1"/>
</dbReference>
<dbReference type="InterPro" id="IPR013785">
    <property type="entry name" value="Aldolase_TIM"/>
</dbReference>
<dbReference type="InterPro" id="IPR011060">
    <property type="entry name" value="RibuloseP-bd_barrel"/>
</dbReference>
<dbReference type="InterPro" id="IPR018204">
    <property type="entry name" value="Trp_synthase_alpha_AS"/>
</dbReference>
<dbReference type="InterPro" id="IPR002028">
    <property type="entry name" value="Trp_synthase_suA"/>
</dbReference>
<dbReference type="NCBIfam" id="TIGR00262">
    <property type="entry name" value="trpA"/>
    <property type="match status" value="1"/>
</dbReference>
<dbReference type="PANTHER" id="PTHR43406:SF1">
    <property type="entry name" value="TRYPTOPHAN SYNTHASE ALPHA CHAIN, CHLOROPLASTIC"/>
    <property type="match status" value="1"/>
</dbReference>
<dbReference type="PANTHER" id="PTHR43406">
    <property type="entry name" value="TRYPTOPHAN SYNTHASE, ALPHA CHAIN"/>
    <property type="match status" value="1"/>
</dbReference>
<dbReference type="Pfam" id="PF00290">
    <property type="entry name" value="Trp_syntA"/>
    <property type="match status" value="1"/>
</dbReference>
<dbReference type="SUPFAM" id="SSF51366">
    <property type="entry name" value="Ribulose-phoshate binding barrel"/>
    <property type="match status" value="1"/>
</dbReference>
<dbReference type="PROSITE" id="PS00167">
    <property type="entry name" value="TRP_SYNTHASE_ALPHA"/>
    <property type="match status" value="1"/>
</dbReference>
<gene>
    <name evidence="1" type="primary">trpA</name>
    <name type="ordered locus">Pnuc_0773</name>
</gene>
<evidence type="ECO:0000255" key="1">
    <source>
        <dbReference type="HAMAP-Rule" id="MF_00131"/>
    </source>
</evidence>
<proteinExistence type="inferred from homology"/>